<name>RL6_FRATO</name>
<sequence length="178" mass="19075">MSRIGKKPVVIPSGVTINVAAGNKVEVKGAKATLSKTFSTDVTFSVADNVATITPNNNSKNAVAQSGTARAILSNMVEGVSKGFERKLKIIGVGYRAKAQGNELNLTLGFSHPVVYKLPQGITAETPAPTEIILKGADKELLGKVASEVREYRKPEPYKGKGVRYEDEYVAKKEAKKK</sequence>
<keyword id="KW-0687">Ribonucleoprotein</keyword>
<keyword id="KW-0689">Ribosomal protein</keyword>
<keyword id="KW-0694">RNA-binding</keyword>
<keyword id="KW-0699">rRNA-binding</keyword>
<reference key="1">
    <citation type="journal article" date="2006" name="J. Bacteriol.">
        <title>Chromosome rearrangement and diversification of Francisella tularensis revealed by the type B (OSU18) genome sequence.</title>
        <authorList>
            <person name="Petrosino J.F."/>
            <person name="Xiang Q."/>
            <person name="Karpathy S.E."/>
            <person name="Jiang H."/>
            <person name="Yerrapragada S."/>
            <person name="Liu Y."/>
            <person name="Gioia J."/>
            <person name="Hemphill L."/>
            <person name="Gonzalez A."/>
            <person name="Raghavan T.M."/>
            <person name="Uzman A."/>
            <person name="Fox G.E."/>
            <person name="Highlander S."/>
            <person name="Reichard M."/>
            <person name="Morton R.J."/>
            <person name="Clinkenbeard K.D."/>
            <person name="Weinstock G.M."/>
        </authorList>
    </citation>
    <scope>NUCLEOTIDE SEQUENCE [LARGE SCALE GENOMIC DNA]</scope>
    <source>
        <strain>OSU18</strain>
    </source>
</reference>
<protein>
    <recommendedName>
        <fullName evidence="1">Large ribosomal subunit protein uL6</fullName>
    </recommendedName>
    <alternativeName>
        <fullName evidence="2">50S ribosomal protein L6</fullName>
    </alternativeName>
</protein>
<evidence type="ECO:0000255" key="1">
    <source>
        <dbReference type="HAMAP-Rule" id="MF_01365"/>
    </source>
</evidence>
<evidence type="ECO:0000305" key="2"/>
<accession>Q0BNR2</accession>
<dbReference type="EMBL" id="CP000437">
    <property type="protein sequence ID" value="ABI82272.1"/>
    <property type="molecule type" value="Genomic_DNA"/>
</dbReference>
<dbReference type="RefSeq" id="WP_003014357.1">
    <property type="nucleotide sequence ID" value="NC_017463.1"/>
</dbReference>
<dbReference type="SMR" id="Q0BNR2"/>
<dbReference type="KEGG" id="fth:FTH_0246"/>
<dbReference type="GO" id="GO:0022625">
    <property type="term" value="C:cytosolic large ribosomal subunit"/>
    <property type="evidence" value="ECO:0007669"/>
    <property type="project" value="TreeGrafter"/>
</dbReference>
<dbReference type="GO" id="GO:0019843">
    <property type="term" value="F:rRNA binding"/>
    <property type="evidence" value="ECO:0007669"/>
    <property type="project" value="UniProtKB-UniRule"/>
</dbReference>
<dbReference type="GO" id="GO:0003735">
    <property type="term" value="F:structural constituent of ribosome"/>
    <property type="evidence" value="ECO:0007669"/>
    <property type="project" value="InterPro"/>
</dbReference>
<dbReference type="GO" id="GO:0002181">
    <property type="term" value="P:cytoplasmic translation"/>
    <property type="evidence" value="ECO:0007669"/>
    <property type="project" value="TreeGrafter"/>
</dbReference>
<dbReference type="FunFam" id="3.90.930.12:FF:000001">
    <property type="entry name" value="50S ribosomal protein L6"/>
    <property type="match status" value="1"/>
</dbReference>
<dbReference type="Gene3D" id="3.90.930.12">
    <property type="entry name" value="Ribosomal protein L6, alpha-beta domain"/>
    <property type="match status" value="2"/>
</dbReference>
<dbReference type="HAMAP" id="MF_01365_B">
    <property type="entry name" value="Ribosomal_uL6_B"/>
    <property type="match status" value="1"/>
</dbReference>
<dbReference type="InterPro" id="IPR000702">
    <property type="entry name" value="Ribosomal_uL6-like"/>
</dbReference>
<dbReference type="InterPro" id="IPR036789">
    <property type="entry name" value="Ribosomal_uL6-like_a/b-dom_sf"/>
</dbReference>
<dbReference type="InterPro" id="IPR020040">
    <property type="entry name" value="Ribosomal_uL6_a/b-dom"/>
</dbReference>
<dbReference type="InterPro" id="IPR019906">
    <property type="entry name" value="Ribosomal_uL6_bac-type"/>
</dbReference>
<dbReference type="InterPro" id="IPR002358">
    <property type="entry name" value="Ribosomal_uL6_CS"/>
</dbReference>
<dbReference type="NCBIfam" id="TIGR03654">
    <property type="entry name" value="L6_bact"/>
    <property type="match status" value="1"/>
</dbReference>
<dbReference type="PANTHER" id="PTHR11655">
    <property type="entry name" value="60S/50S RIBOSOMAL PROTEIN L6/L9"/>
    <property type="match status" value="1"/>
</dbReference>
<dbReference type="PANTHER" id="PTHR11655:SF14">
    <property type="entry name" value="LARGE RIBOSOMAL SUBUNIT PROTEIN UL6M"/>
    <property type="match status" value="1"/>
</dbReference>
<dbReference type="Pfam" id="PF00347">
    <property type="entry name" value="Ribosomal_L6"/>
    <property type="match status" value="2"/>
</dbReference>
<dbReference type="PIRSF" id="PIRSF002162">
    <property type="entry name" value="Ribosomal_L6"/>
    <property type="match status" value="1"/>
</dbReference>
<dbReference type="PRINTS" id="PR00059">
    <property type="entry name" value="RIBOSOMALL6"/>
</dbReference>
<dbReference type="SUPFAM" id="SSF56053">
    <property type="entry name" value="Ribosomal protein L6"/>
    <property type="match status" value="2"/>
</dbReference>
<dbReference type="PROSITE" id="PS00525">
    <property type="entry name" value="RIBOSOMAL_L6_1"/>
    <property type="match status" value="1"/>
</dbReference>
<comment type="function">
    <text evidence="1">This protein binds to the 23S rRNA, and is important in its secondary structure. It is located near the subunit interface in the base of the L7/L12 stalk, and near the tRNA binding site of the peptidyltransferase center.</text>
</comment>
<comment type="subunit">
    <text evidence="1">Part of the 50S ribosomal subunit.</text>
</comment>
<comment type="similarity">
    <text evidence="1">Belongs to the universal ribosomal protein uL6 family.</text>
</comment>
<gene>
    <name evidence="1" type="primary">rplF</name>
    <name type="ordered locus">FTH_0246</name>
</gene>
<feature type="chain" id="PRO_0000260867" description="Large ribosomal subunit protein uL6">
    <location>
        <begin position="1"/>
        <end position="178"/>
    </location>
</feature>
<proteinExistence type="inferred from homology"/>
<organism>
    <name type="scientific">Francisella tularensis subsp. holarctica (strain OSU18)</name>
    <dbReference type="NCBI Taxonomy" id="393011"/>
    <lineage>
        <taxon>Bacteria</taxon>
        <taxon>Pseudomonadati</taxon>
        <taxon>Pseudomonadota</taxon>
        <taxon>Gammaproteobacteria</taxon>
        <taxon>Thiotrichales</taxon>
        <taxon>Francisellaceae</taxon>
        <taxon>Francisella</taxon>
    </lineage>
</organism>